<comment type="function">
    <text evidence="1">Methionine-sulfoxide reductase that specifically reduces methionine (R)-sulfoxide back to methionine. While in many cases, methionine oxidation is the result of random oxidation following oxidative stress, methionine oxidation is also a post-translational modification that takes place on specific residue. Acts as a regulator of actin assembly by reducing methionine (R)-sulfoxide mediated by MICALs (MICAL1, MICAL2 or MICAL3) on actin, thereby promoting filament repolymerization. Plays a role in innate immunity by reducing oxidized actin, leading to actin repolymerization in macrophages.</text>
</comment>
<comment type="catalytic activity">
    <reaction evidence="1">
        <text>L-methionyl-[protein] + [thioredoxin]-disulfide + H2O = L-methionyl-(R)-S-oxide-[protein] + [thioredoxin]-dithiol</text>
        <dbReference type="Rhea" id="RHEA:24164"/>
        <dbReference type="Rhea" id="RHEA-COMP:10698"/>
        <dbReference type="Rhea" id="RHEA-COMP:10700"/>
        <dbReference type="Rhea" id="RHEA-COMP:12313"/>
        <dbReference type="Rhea" id="RHEA-COMP:12314"/>
        <dbReference type="ChEBI" id="CHEBI:15377"/>
        <dbReference type="ChEBI" id="CHEBI:16044"/>
        <dbReference type="ChEBI" id="CHEBI:29950"/>
        <dbReference type="ChEBI" id="CHEBI:45764"/>
        <dbReference type="ChEBI" id="CHEBI:50058"/>
        <dbReference type="EC" id="1.8.4.12"/>
    </reaction>
</comment>
<comment type="catalytic activity">
    <reaction evidence="1">
        <text>[thioredoxin]-disulfide + L-methionine + H2O = L-methionine (R)-S-oxide + [thioredoxin]-dithiol</text>
        <dbReference type="Rhea" id="RHEA:21260"/>
        <dbReference type="Rhea" id="RHEA-COMP:10698"/>
        <dbReference type="Rhea" id="RHEA-COMP:10700"/>
        <dbReference type="ChEBI" id="CHEBI:15377"/>
        <dbReference type="ChEBI" id="CHEBI:29950"/>
        <dbReference type="ChEBI" id="CHEBI:50058"/>
        <dbReference type="ChEBI" id="CHEBI:57844"/>
        <dbReference type="ChEBI" id="CHEBI:58773"/>
        <dbReference type="EC" id="1.8.4.14"/>
    </reaction>
</comment>
<comment type="cofactor">
    <cofactor evidence="1">
        <name>Zn(2+)</name>
        <dbReference type="ChEBI" id="CHEBI:29105"/>
    </cofactor>
    <text evidence="1">Binds 1 zinc ion per subunit.</text>
</comment>
<comment type="subcellular location">
    <subcellularLocation>
        <location evidence="1">Cytoplasm</location>
    </subcellularLocation>
    <subcellularLocation>
        <location evidence="1">Nucleus</location>
    </subcellularLocation>
    <subcellularLocation>
        <location evidence="1">Cytoplasm</location>
        <location evidence="1">Cytoskeleton</location>
    </subcellularLocation>
</comment>
<comment type="PTM">
    <text evidence="2">Truncated MSRB1/SEPX1 proteins produced by failed UGA/Sec decoding are ubiquitinated by the CRL2(FEM1C) E3 ubiquitin-protein ligase complex.</text>
</comment>
<comment type="similarity">
    <text evidence="4">Belongs to the MsrB Met sulfoxide reductase family.</text>
</comment>
<comment type="sequence caution" evidence="4">
    <conflict type="erroneous termination">
        <sequence resource="EMBL-CDS" id="AAH94309"/>
    </conflict>
    <text>Truncated C-terminus.</text>
</comment>
<protein>
    <recommendedName>
        <fullName>Methionine-R-sulfoxide reductase B1</fullName>
        <shortName>MsrB1</shortName>
        <ecNumber evidence="1">1.8.4.12</ecNumber>
        <ecNumber evidence="1">1.8.4.14</ecNumber>
    </recommendedName>
    <alternativeName>
        <fullName>Selenoprotein X</fullName>
        <shortName>SelX</shortName>
    </alternativeName>
</protein>
<reference key="1">
    <citation type="journal article" date="2004" name="Genome Res.">
        <title>The status, quality, and expansion of the NIH full-length cDNA project: the Mammalian Gene Collection (MGC).</title>
        <authorList>
            <consortium name="The MGC Project Team"/>
        </authorList>
    </citation>
    <scope>NUCLEOTIDE SEQUENCE [LARGE SCALE MRNA]</scope>
    <source>
        <tissue>Brain</tissue>
    </source>
</reference>
<name>MSRB1_RAT</name>
<organism>
    <name type="scientific">Rattus norvegicus</name>
    <name type="common">Rat</name>
    <dbReference type="NCBI Taxonomy" id="10116"/>
    <lineage>
        <taxon>Eukaryota</taxon>
        <taxon>Metazoa</taxon>
        <taxon>Chordata</taxon>
        <taxon>Craniata</taxon>
        <taxon>Vertebrata</taxon>
        <taxon>Euteleostomi</taxon>
        <taxon>Mammalia</taxon>
        <taxon>Eutheria</taxon>
        <taxon>Euarchontoglires</taxon>
        <taxon>Glires</taxon>
        <taxon>Rodentia</taxon>
        <taxon>Myomorpha</taxon>
        <taxon>Muroidea</taxon>
        <taxon>Muridae</taxon>
        <taxon>Murinae</taxon>
        <taxon>Rattus</taxon>
    </lineage>
</organism>
<proteinExistence type="inferred from homology"/>
<gene>
    <name type="primary">Msrb1</name>
    <name type="synonym">Sepx1</name>
</gene>
<keyword id="KW-0963">Cytoplasm</keyword>
<keyword id="KW-0206">Cytoskeleton</keyword>
<keyword id="KW-0391">Immunity</keyword>
<keyword id="KW-0399">Innate immunity</keyword>
<keyword id="KW-0479">Metal-binding</keyword>
<keyword id="KW-0539">Nucleus</keyword>
<keyword id="KW-0560">Oxidoreductase</keyword>
<keyword id="KW-1185">Reference proteome</keyword>
<keyword id="KW-0712">Selenocysteine</keyword>
<keyword id="KW-0832">Ubl conjugation</keyword>
<keyword id="KW-0862">Zinc</keyword>
<evidence type="ECO:0000250" key="1">
    <source>
        <dbReference type="UniProtKB" id="Q9JLC3"/>
    </source>
</evidence>
<evidence type="ECO:0000250" key="2">
    <source>
        <dbReference type="UniProtKB" id="Q9NZV6"/>
    </source>
</evidence>
<evidence type="ECO:0000255" key="3">
    <source>
        <dbReference type="PROSITE-ProRule" id="PRU01126"/>
    </source>
</evidence>
<evidence type="ECO:0000305" key="4"/>
<dbReference type="EC" id="1.8.4.12" evidence="1"/>
<dbReference type="EC" id="1.8.4.14" evidence="1"/>
<dbReference type="EMBL" id="BC094309">
    <property type="protein sequence ID" value="AAH94309.1"/>
    <property type="status" value="ALT_SEQ"/>
    <property type="molecule type" value="mRNA"/>
</dbReference>
<dbReference type="RefSeq" id="NP_001037750.2">
    <property type="nucleotide sequence ID" value="NM_001044285.3"/>
</dbReference>
<dbReference type="FunCoup" id="Q52KJ8">
    <property type="interactions" value="180"/>
</dbReference>
<dbReference type="STRING" id="10116.ENSRNOP00000074809"/>
<dbReference type="ChEMBL" id="CHEMBL3509600"/>
<dbReference type="PhosphoSitePlus" id="Q52KJ8"/>
<dbReference type="Ensembl" id="ENSRNOT00000090552.2">
    <property type="protein sequence ID" value="ENSRNOP00000074809.2"/>
    <property type="gene ID" value="ENSRNOG00000055314.2"/>
</dbReference>
<dbReference type="GeneID" id="685059"/>
<dbReference type="KEGG" id="rno:685059"/>
<dbReference type="UCSC" id="RGD:1583243">
    <property type="organism name" value="rat"/>
</dbReference>
<dbReference type="AGR" id="RGD:1583243"/>
<dbReference type="CTD" id="51734"/>
<dbReference type="RGD" id="1583243">
    <property type="gene designation" value="Msrb1"/>
</dbReference>
<dbReference type="GeneTree" id="ENSGT00510000047678"/>
<dbReference type="InParanoid" id="Q52KJ8"/>
<dbReference type="OMA" id="CSKCEHQ"/>
<dbReference type="OrthoDB" id="44061at2759"/>
<dbReference type="PhylomeDB" id="Q52KJ8"/>
<dbReference type="TreeFam" id="TF329147"/>
<dbReference type="Reactome" id="R-RNO-5676934">
    <property type="pathway name" value="Protein repair"/>
</dbReference>
<dbReference type="PRO" id="PR:Q52KJ8"/>
<dbReference type="Proteomes" id="UP000002494">
    <property type="component" value="Chromosome 10"/>
</dbReference>
<dbReference type="GO" id="GO:0015629">
    <property type="term" value="C:actin cytoskeleton"/>
    <property type="evidence" value="ECO:0000266"/>
    <property type="project" value="RGD"/>
</dbReference>
<dbReference type="GO" id="GO:0005737">
    <property type="term" value="C:cytoplasm"/>
    <property type="evidence" value="ECO:0000266"/>
    <property type="project" value="RGD"/>
</dbReference>
<dbReference type="GO" id="GO:0005634">
    <property type="term" value="C:nucleus"/>
    <property type="evidence" value="ECO:0000266"/>
    <property type="project" value="RGD"/>
</dbReference>
<dbReference type="GO" id="GO:0003779">
    <property type="term" value="F:actin binding"/>
    <property type="evidence" value="ECO:0000250"/>
    <property type="project" value="UniProtKB"/>
</dbReference>
<dbReference type="GO" id="GO:0033745">
    <property type="term" value="F:L-methionine-(R)-S-oxide reductase activity"/>
    <property type="evidence" value="ECO:0007669"/>
    <property type="project" value="UniProtKB-EC"/>
</dbReference>
<dbReference type="GO" id="GO:0033743">
    <property type="term" value="F:peptide-methionine (R)-S-oxide reductase activity"/>
    <property type="evidence" value="ECO:0000250"/>
    <property type="project" value="UniProtKB"/>
</dbReference>
<dbReference type="GO" id="GO:0008270">
    <property type="term" value="F:zinc ion binding"/>
    <property type="evidence" value="ECO:0000266"/>
    <property type="project" value="RGD"/>
</dbReference>
<dbReference type="GO" id="GO:0030041">
    <property type="term" value="P:actin filament polymerization"/>
    <property type="evidence" value="ECO:0000250"/>
    <property type="project" value="UniProtKB"/>
</dbReference>
<dbReference type="GO" id="GO:0045087">
    <property type="term" value="P:innate immune response"/>
    <property type="evidence" value="ECO:0000250"/>
    <property type="project" value="UniProtKB"/>
</dbReference>
<dbReference type="GO" id="GO:0030091">
    <property type="term" value="P:protein repair"/>
    <property type="evidence" value="ECO:0000266"/>
    <property type="project" value="RGD"/>
</dbReference>
<dbReference type="FunFam" id="2.170.150.20:FF:000008">
    <property type="entry name" value="methionine-R-sulfoxide reductase B1"/>
    <property type="match status" value="1"/>
</dbReference>
<dbReference type="Gene3D" id="2.170.150.20">
    <property type="entry name" value="Peptide methionine sulfoxide reductase"/>
    <property type="match status" value="1"/>
</dbReference>
<dbReference type="InterPro" id="IPR002579">
    <property type="entry name" value="Met_Sox_Rdtase_MsrB_dom"/>
</dbReference>
<dbReference type="InterPro" id="IPR052150">
    <property type="entry name" value="MsrB_Met_sulfoxide_reductase"/>
</dbReference>
<dbReference type="InterPro" id="IPR011057">
    <property type="entry name" value="Mss4-like_sf"/>
</dbReference>
<dbReference type="PANTHER" id="PTHR46755">
    <property type="entry name" value="METHIONINE-R-SULFOXIDE REDUCTASE B1"/>
    <property type="match status" value="1"/>
</dbReference>
<dbReference type="PANTHER" id="PTHR46755:SF5">
    <property type="entry name" value="METHIONINE-R-SULFOXIDE REDUCTASE B1"/>
    <property type="match status" value="1"/>
</dbReference>
<dbReference type="Pfam" id="PF01641">
    <property type="entry name" value="SelR"/>
    <property type="match status" value="1"/>
</dbReference>
<dbReference type="SUPFAM" id="SSF51316">
    <property type="entry name" value="Mss4-like"/>
    <property type="match status" value="1"/>
</dbReference>
<dbReference type="PROSITE" id="PS51790">
    <property type="entry name" value="MSRB"/>
    <property type="match status" value="1"/>
</dbReference>
<feature type="chain" id="PRO_0000318612" description="Methionine-R-sulfoxide reductase B1">
    <location>
        <begin position="1"/>
        <end position="116"/>
    </location>
</feature>
<feature type="domain" description="MsrB" evidence="3">
    <location>
        <begin position="1"/>
        <end position="106"/>
    </location>
</feature>
<feature type="active site" description="Nucleophile" evidence="3">
    <location>
        <position position="95"/>
    </location>
</feature>
<feature type="binding site" evidence="3">
    <location>
        <position position="23"/>
    </location>
    <ligand>
        <name>Zn(2+)</name>
        <dbReference type="ChEBI" id="CHEBI:29105"/>
    </ligand>
</feature>
<feature type="binding site" evidence="3">
    <location>
        <position position="26"/>
    </location>
    <ligand>
        <name>Zn(2+)</name>
        <dbReference type="ChEBI" id="CHEBI:29105"/>
    </ligand>
</feature>
<feature type="binding site" evidence="3">
    <location>
        <position position="71"/>
    </location>
    <ligand>
        <name>Zn(2+)</name>
        <dbReference type="ChEBI" id="CHEBI:29105"/>
    </ligand>
</feature>
<feature type="binding site" evidence="3">
    <location>
        <position position="74"/>
    </location>
    <ligand>
        <name>Zn(2+)</name>
        <dbReference type="ChEBI" id="CHEBI:29105"/>
    </ligand>
</feature>
<feature type="non-standard amino acid" description="Selenocysteine" evidence="2">
    <location>
        <position position="95"/>
    </location>
</feature>
<accession>Q52KJ8</accession>
<sequence length="116" mass="12797">MSFCSFFGGEVFQNHFEPGVYVCAKCGYELFSSRSKYAHSSPWPAFTETIHEDSVAKCPEKNRPEALKVSCGKCGNGLGHEFLNDGPKRGQSRFUIFSSSLKFIPKGKEAPASQGD</sequence>